<proteinExistence type="inferred from homology"/>
<dbReference type="EC" id="7.1.1.-" evidence="1"/>
<dbReference type="EMBL" id="CP000473">
    <property type="protein sequence ID" value="ABJ84847.1"/>
    <property type="molecule type" value="Genomic_DNA"/>
</dbReference>
<dbReference type="SMR" id="Q01ZR8"/>
<dbReference type="FunCoup" id="Q01ZR8">
    <property type="interactions" value="486"/>
</dbReference>
<dbReference type="STRING" id="234267.Acid_3879"/>
<dbReference type="KEGG" id="sus:Acid_3879"/>
<dbReference type="eggNOG" id="COG1143">
    <property type="taxonomic scope" value="Bacteria"/>
</dbReference>
<dbReference type="HOGENOM" id="CLU_067218_4_3_0"/>
<dbReference type="InParanoid" id="Q01ZR8"/>
<dbReference type="OrthoDB" id="9803192at2"/>
<dbReference type="GO" id="GO:0005886">
    <property type="term" value="C:plasma membrane"/>
    <property type="evidence" value="ECO:0007669"/>
    <property type="project" value="UniProtKB-SubCell"/>
</dbReference>
<dbReference type="GO" id="GO:0051539">
    <property type="term" value="F:4 iron, 4 sulfur cluster binding"/>
    <property type="evidence" value="ECO:0007669"/>
    <property type="project" value="UniProtKB-KW"/>
</dbReference>
<dbReference type="GO" id="GO:0005506">
    <property type="term" value="F:iron ion binding"/>
    <property type="evidence" value="ECO:0007669"/>
    <property type="project" value="UniProtKB-UniRule"/>
</dbReference>
<dbReference type="GO" id="GO:0050136">
    <property type="term" value="F:NADH:ubiquinone reductase (non-electrogenic) activity"/>
    <property type="evidence" value="ECO:0007669"/>
    <property type="project" value="UniProtKB-UniRule"/>
</dbReference>
<dbReference type="GO" id="GO:0048038">
    <property type="term" value="F:quinone binding"/>
    <property type="evidence" value="ECO:0007669"/>
    <property type="project" value="UniProtKB-KW"/>
</dbReference>
<dbReference type="GO" id="GO:0009060">
    <property type="term" value="P:aerobic respiration"/>
    <property type="evidence" value="ECO:0007669"/>
    <property type="project" value="TreeGrafter"/>
</dbReference>
<dbReference type="Gene3D" id="3.30.70.3270">
    <property type="match status" value="1"/>
</dbReference>
<dbReference type="HAMAP" id="MF_01351">
    <property type="entry name" value="NDH1_NuoI"/>
    <property type="match status" value="1"/>
</dbReference>
<dbReference type="InterPro" id="IPR017896">
    <property type="entry name" value="4Fe4S_Fe-S-bd"/>
</dbReference>
<dbReference type="InterPro" id="IPR017900">
    <property type="entry name" value="4Fe4S_Fe_S_CS"/>
</dbReference>
<dbReference type="InterPro" id="IPR010226">
    <property type="entry name" value="NADH_quinone_OxRdtase_chainI"/>
</dbReference>
<dbReference type="NCBIfam" id="TIGR01971">
    <property type="entry name" value="NuoI"/>
    <property type="match status" value="1"/>
</dbReference>
<dbReference type="NCBIfam" id="NF004537">
    <property type="entry name" value="PRK05888.1-3"/>
    <property type="match status" value="1"/>
</dbReference>
<dbReference type="PANTHER" id="PTHR10849:SF20">
    <property type="entry name" value="NADH DEHYDROGENASE [UBIQUINONE] IRON-SULFUR PROTEIN 8, MITOCHONDRIAL"/>
    <property type="match status" value="1"/>
</dbReference>
<dbReference type="PANTHER" id="PTHR10849">
    <property type="entry name" value="NADH DEHYDROGENASE UBIQUINONE IRON-SULFUR PROTEIN 8, MITOCHONDRIAL"/>
    <property type="match status" value="1"/>
</dbReference>
<dbReference type="Pfam" id="PF12838">
    <property type="entry name" value="Fer4_7"/>
    <property type="match status" value="1"/>
</dbReference>
<dbReference type="SUPFAM" id="SSF54862">
    <property type="entry name" value="4Fe-4S ferredoxins"/>
    <property type="match status" value="1"/>
</dbReference>
<dbReference type="PROSITE" id="PS00198">
    <property type="entry name" value="4FE4S_FER_1"/>
    <property type="match status" value="2"/>
</dbReference>
<dbReference type="PROSITE" id="PS51379">
    <property type="entry name" value="4FE4S_FER_2"/>
    <property type="match status" value="2"/>
</dbReference>
<sequence length="167" mass="18088">MANPIEEILGTAAAIAKGMGITFKEMMGPTVTDDYPDAPPKFEERFRGVHVLQRDVNGMEKCVACFLCAAACPSNCIYIEAAENTDKIRMSGGERYAKVYNIDYNRCIFCGYCVEACPTDAITHGHGFEAASYNTSTLVKRKEDMLVPVPPGAKPPSMADEVPAGAH</sequence>
<organism>
    <name type="scientific">Solibacter usitatus (strain Ellin6076)</name>
    <dbReference type="NCBI Taxonomy" id="234267"/>
    <lineage>
        <taxon>Bacteria</taxon>
        <taxon>Pseudomonadati</taxon>
        <taxon>Acidobacteriota</taxon>
        <taxon>Terriglobia</taxon>
        <taxon>Bryobacterales</taxon>
        <taxon>Solibacteraceae</taxon>
        <taxon>Candidatus Solibacter</taxon>
    </lineage>
</organism>
<protein>
    <recommendedName>
        <fullName evidence="1">NADH-quinone oxidoreductase subunit I 1</fullName>
        <ecNumber evidence="1">7.1.1.-</ecNumber>
    </recommendedName>
    <alternativeName>
        <fullName evidence="1">NADH dehydrogenase I subunit I 1</fullName>
    </alternativeName>
    <alternativeName>
        <fullName evidence="1">NDH-1 subunit I 1</fullName>
    </alternativeName>
</protein>
<gene>
    <name evidence="1" type="primary">nuoI1</name>
    <name type="ordered locus">Acid_3879</name>
</gene>
<feature type="chain" id="PRO_0000298550" description="NADH-quinone oxidoreductase subunit I 1">
    <location>
        <begin position="1"/>
        <end position="167"/>
    </location>
</feature>
<feature type="domain" description="4Fe-4S ferredoxin-type 1" evidence="1">
    <location>
        <begin position="52"/>
        <end position="82"/>
    </location>
</feature>
<feature type="domain" description="4Fe-4S ferredoxin-type 2" evidence="1">
    <location>
        <begin position="98"/>
        <end position="127"/>
    </location>
</feature>
<feature type="region of interest" description="Disordered" evidence="2">
    <location>
        <begin position="148"/>
        <end position="167"/>
    </location>
</feature>
<feature type="binding site" evidence="1">
    <location>
        <position position="62"/>
    </location>
    <ligand>
        <name>[4Fe-4S] cluster</name>
        <dbReference type="ChEBI" id="CHEBI:49883"/>
        <label>1</label>
    </ligand>
</feature>
<feature type="binding site" evidence="1">
    <location>
        <position position="65"/>
    </location>
    <ligand>
        <name>[4Fe-4S] cluster</name>
        <dbReference type="ChEBI" id="CHEBI:49883"/>
        <label>1</label>
    </ligand>
</feature>
<feature type="binding site" evidence="1">
    <location>
        <position position="68"/>
    </location>
    <ligand>
        <name>[4Fe-4S] cluster</name>
        <dbReference type="ChEBI" id="CHEBI:49883"/>
        <label>1</label>
    </ligand>
</feature>
<feature type="binding site" evidence="1">
    <location>
        <position position="72"/>
    </location>
    <ligand>
        <name>[4Fe-4S] cluster</name>
        <dbReference type="ChEBI" id="CHEBI:49883"/>
        <label>2</label>
    </ligand>
</feature>
<feature type="binding site" evidence="1">
    <location>
        <position position="107"/>
    </location>
    <ligand>
        <name>[4Fe-4S] cluster</name>
        <dbReference type="ChEBI" id="CHEBI:49883"/>
        <label>2</label>
    </ligand>
</feature>
<feature type="binding site" evidence="1">
    <location>
        <position position="110"/>
    </location>
    <ligand>
        <name>[4Fe-4S] cluster</name>
        <dbReference type="ChEBI" id="CHEBI:49883"/>
        <label>2</label>
    </ligand>
</feature>
<feature type="binding site" evidence="1">
    <location>
        <position position="113"/>
    </location>
    <ligand>
        <name>[4Fe-4S] cluster</name>
        <dbReference type="ChEBI" id="CHEBI:49883"/>
        <label>2</label>
    </ligand>
</feature>
<feature type="binding site" evidence="1">
    <location>
        <position position="117"/>
    </location>
    <ligand>
        <name>[4Fe-4S] cluster</name>
        <dbReference type="ChEBI" id="CHEBI:49883"/>
        <label>1</label>
    </ligand>
</feature>
<evidence type="ECO:0000255" key="1">
    <source>
        <dbReference type="HAMAP-Rule" id="MF_01351"/>
    </source>
</evidence>
<evidence type="ECO:0000256" key="2">
    <source>
        <dbReference type="SAM" id="MobiDB-lite"/>
    </source>
</evidence>
<accession>Q01ZR8</accession>
<name>NUOI1_SOLUE</name>
<comment type="function">
    <text evidence="1">NDH-1 shuttles electrons from NADH, via FMN and iron-sulfur (Fe-S) centers, to quinones in the respiratory chain. The immediate electron acceptor for the enzyme in this species is believed to be ubiquinone. Couples the redox reaction to proton translocation (for every two electrons transferred, four hydrogen ions are translocated across the cytoplasmic membrane), and thus conserves the redox energy in a proton gradient.</text>
</comment>
<comment type="catalytic activity">
    <reaction evidence="1">
        <text>a quinone + NADH + 5 H(+)(in) = a quinol + NAD(+) + 4 H(+)(out)</text>
        <dbReference type="Rhea" id="RHEA:57888"/>
        <dbReference type="ChEBI" id="CHEBI:15378"/>
        <dbReference type="ChEBI" id="CHEBI:24646"/>
        <dbReference type="ChEBI" id="CHEBI:57540"/>
        <dbReference type="ChEBI" id="CHEBI:57945"/>
        <dbReference type="ChEBI" id="CHEBI:132124"/>
    </reaction>
</comment>
<comment type="cofactor">
    <cofactor evidence="1">
        <name>[4Fe-4S] cluster</name>
        <dbReference type="ChEBI" id="CHEBI:49883"/>
    </cofactor>
    <text evidence="1">Binds 2 [4Fe-4S] clusters per subunit.</text>
</comment>
<comment type="subunit">
    <text evidence="1">NDH-1 is composed of 14 different subunits. Subunits NuoA, H, J, K, L, M, N constitute the membrane sector of the complex.</text>
</comment>
<comment type="subcellular location">
    <subcellularLocation>
        <location evidence="1">Cell inner membrane</location>
        <topology evidence="1">Peripheral membrane protein</topology>
    </subcellularLocation>
</comment>
<comment type="similarity">
    <text evidence="1">Belongs to the complex I 23 kDa subunit family.</text>
</comment>
<keyword id="KW-0004">4Fe-4S</keyword>
<keyword id="KW-0997">Cell inner membrane</keyword>
<keyword id="KW-1003">Cell membrane</keyword>
<keyword id="KW-0408">Iron</keyword>
<keyword id="KW-0411">Iron-sulfur</keyword>
<keyword id="KW-0472">Membrane</keyword>
<keyword id="KW-0479">Metal-binding</keyword>
<keyword id="KW-0520">NAD</keyword>
<keyword id="KW-0874">Quinone</keyword>
<keyword id="KW-0677">Repeat</keyword>
<keyword id="KW-1278">Translocase</keyword>
<keyword id="KW-0830">Ubiquinone</keyword>
<reference key="1">
    <citation type="journal article" date="2009" name="Appl. Environ. Microbiol.">
        <title>Three genomes from the phylum Acidobacteria provide insight into the lifestyles of these microorganisms in soils.</title>
        <authorList>
            <person name="Ward N.L."/>
            <person name="Challacombe J.F."/>
            <person name="Janssen P.H."/>
            <person name="Henrissat B."/>
            <person name="Coutinho P.M."/>
            <person name="Wu M."/>
            <person name="Xie G."/>
            <person name="Haft D.H."/>
            <person name="Sait M."/>
            <person name="Badger J."/>
            <person name="Barabote R.D."/>
            <person name="Bradley B."/>
            <person name="Brettin T.S."/>
            <person name="Brinkac L.M."/>
            <person name="Bruce D."/>
            <person name="Creasy T."/>
            <person name="Daugherty S.C."/>
            <person name="Davidsen T.M."/>
            <person name="DeBoy R.T."/>
            <person name="Detter J.C."/>
            <person name="Dodson R.J."/>
            <person name="Durkin A.S."/>
            <person name="Ganapathy A."/>
            <person name="Gwinn-Giglio M."/>
            <person name="Han C.S."/>
            <person name="Khouri H."/>
            <person name="Kiss H."/>
            <person name="Kothari S.P."/>
            <person name="Madupu R."/>
            <person name="Nelson K.E."/>
            <person name="Nelson W.C."/>
            <person name="Paulsen I."/>
            <person name="Penn K."/>
            <person name="Ren Q."/>
            <person name="Rosovitz M.J."/>
            <person name="Selengut J.D."/>
            <person name="Shrivastava S."/>
            <person name="Sullivan S.A."/>
            <person name="Tapia R."/>
            <person name="Thompson L.S."/>
            <person name="Watkins K.L."/>
            <person name="Yang Q."/>
            <person name="Yu C."/>
            <person name="Zafar N."/>
            <person name="Zhou L."/>
            <person name="Kuske C.R."/>
        </authorList>
    </citation>
    <scope>NUCLEOTIDE SEQUENCE [LARGE SCALE GENOMIC DNA]</scope>
    <source>
        <strain>Ellin6076</strain>
    </source>
</reference>